<protein>
    <recommendedName>
        <fullName evidence="1">Polyribonucleotide nucleotidyltransferase</fullName>
        <ecNumber evidence="1">2.7.7.8</ecNumber>
    </recommendedName>
    <alternativeName>
        <fullName evidence="1">Polynucleotide phosphorylase</fullName>
        <shortName evidence="1">PNPase</shortName>
    </alternativeName>
</protein>
<sequence length="728" mass="79362">MFVQKSIDLGHGRILSIETGKMAKQADGAAIVRLGDTMVLATVVSSKKTPPLGQDFFPLQVEYREKYSAAGRFPGGFFKREGRPSEKEILSARLIDRALRPLFPDGYYYETQIIISVISSDQVNDGDVLGGLAASAAIMVSDIPFQNPMSEVRVGRVNGLYIINPDVNELKESDIDMCIGGTNDTICMLEGEMNEISETEMLEAIQFGHTAIRKLCVLQQEVAAEVAKPKRLFVPTVIPTELDSFVRANCQSRLRELAYTPLGKEERAERTAAIYNETLAATLEHFRATISSEEAQADTAKALCLNEHIIEDQIHAVEKEVMRHMILDDAKRLDGRALDQVRPITIELGLIPRAHGSALFTRGETQALVTLTLGTQKDAQSVDNLTNSDDKRFYLHYNFPPFSVGECGRLGSIGRREIGHGNLAERSIKMVAPTEAEFPYTIRIVSDILESNGSSSMASVCGGTLALMDGGVPIRKPVSGIAMGLIKENDKYAVLSDILGNEDHLGDMDFKVSGTRDGITACQMDIKIDGLDYHIVENALEQARKGRLHILNEMEKAIPASRTDLATYAPRLTTIKIPSDCIGMVIGKGGETIRGITEETGAEINIADDGTVTIACTTKEGTDAALATIKSLTAKPEVGNIYVGKVRDVRDELGAFVEFLPKTDGLVHISEISSTRVAKVSDHLKVGDKVTVKLVDVRKDPRTGKTKFALSIKALEQPKQEGGEATQN</sequence>
<gene>
    <name evidence="1" type="primary">pnp</name>
    <name type="ordered locus">Cag_1689</name>
</gene>
<comment type="function">
    <text evidence="1">Involved in mRNA degradation. Catalyzes the phosphorolysis of single-stranded polyribonucleotides processively in the 3'- to 5'-direction.</text>
</comment>
<comment type="catalytic activity">
    <reaction evidence="1">
        <text>RNA(n+1) + phosphate = RNA(n) + a ribonucleoside 5'-diphosphate</text>
        <dbReference type="Rhea" id="RHEA:22096"/>
        <dbReference type="Rhea" id="RHEA-COMP:14527"/>
        <dbReference type="Rhea" id="RHEA-COMP:17342"/>
        <dbReference type="ChEBI" id="CHEBI:43474"/>
        <dbReference type="ChEBI" id="CHEBI:57930"/>
        <dbReference type="ChEBI" id="CHEBI:140395"/>
        <dbReference type="EC" id="2.7.7.8"/>
    </reaction>
</comment>
<comment type="cofactor">
    <cofactor evidence="1">
        <name>Mg(2+)</name>
        <dbReference type="ChEBI" id="CHEBI:18420"/>
    </cofactor>
</comment>
<comment type="subcellular location">
    <subcellularLocation>
        <location evidence="1">Cytoplasm</location>
    </subcellularLocation>
</comment>
<comment type="similarity">
    <text evidence="1">Belongs to the polyribonucleotide nucleotidyltransferase family.</text>
</comment>
<feature type="chain" id="PRO_0000329585" description="Polyribonucleotide nucleotidyltransferase">
    <location>
        <begin position="1"/>
        <end position="728"/>
    </location>
</feature>
<feature type="domain" description="KH" evidence="1">
    <location>
        <begin position="570"/>
        <end position="629"/>
    </location>
</feature>
<feature type="domain" description="S1 motif" evidence="1">
    <location>
        <begin position="639"/>
        <end position="713"/>
    </location>
</feature>
<feature type="binding site" evidence="1">
    <location>
        <position position="503"/>
    </location>
    <ligand>
        <name>Mg(2+)</name>
        <dbReference type="ChEBI" id="CHEBI:18420"/>
    </ligand>
</feature>
<feature type="binding site" evidence="1">
    <location>
        <position position="509"/>
    </location>
    <ligand>
        <name>Mg(2+)</name>
        <dbReference type="ChEBI" id="CHEBI:18420"/>
    </ligand>
</feature>
<dbReference type="EC" id="2.7.7.8" evidence="1"/>
<dbReference type="EMBL" id="CP000108">
    <property type="protein sequence ID" value="ABB28941.1"/>
    <property type="molecule type" value="Genomic_DNA"/>
</dbReference>
<dbReference type="SMR" id="Q3APY4"/>
<dbReference type="STRING" id="340177.Cag_1689"/>
<dbReference type="KEGG" id="cch:Cag_1689"/>
<dbReference type="eggNOG" id="COG1185">
    <property type="taxonomic scope" value="Bacteria"/>
</dbReference>
<dbReference type="HOGENOM" id="CLU_004217_2_2_10"/>
<dbReference type="OrthoDB" id="9804305at2"/>
<dbReference type="GO" id="GO:0005829">
    <property type="term" value="C:cytosol"/>
    <property type="evidence" value="ECO:0007669"/>
    <property type="project" value="TreeGrafter"/>
</dbReference>
<dbReference type="GO" id="GO:0000175">
    <property type="term" value="F:3'-5'-RNA exonuclease activity"/>
    <property type="evidence" value="ECO:0007669"/>
    <property type="project" value="TreeGrafter"/>
</dbReference>
<dbReference type="GO" id="GO:0000287">
    <property type="term" value="F:magnesium ion binding"/>
    <property type="evidence" value="ECO:0007669"/>
    <property type="project" value="UniProtKB-UniRule"/>
</dbReference>
<dbReference type="GO" id="GO:0004654">
    <property type="term" value="F:polyribonucleotide nucleotidyltransferase activity"/>
    <property type="evidence" value="ECO:0007669"/>
    <property type="project" value="UniProtKB-UniRule"/>
</dbReference>
<dbReference type="GO" id="GO:0003723">
    <property type="term" value="F:RNA binding"/>
    <property type="evidence" value="ECO:0007669"/>
    <property type="project" value="UniProtKB-UniRule"/>
</dbReference>
<dbReference type="GO" id="GO:0006402">
    <property type="term" value="P:mRNA catabolic process"/>
    <property type="evidence" value="ECO:0007669"/>
    <property type="project" value="UniProtKB-UniRule"/>
</dbReference>
<dbReference type="GO" id="GO:0006396">
    <property type="term" value="P:RNA processing"/>
    <property type="evidence" value="ECO:0007669"/>
    <property type="project" value="InterPro"/>
</dbReference>
<dbReference type="CDD" id="cd02393">
    <property type="entry name" value="KH-I_PNPase"/>
    <property type="match status" value="1"/>
</dbReference>
<dbReference type="CDD" id="cd11363">
    <property type="entry name" value="RNase_PH_PNPase_1"/>
    <property type="match status" value="1"/>
</dbReference>
<dbReference type="CDD" id="cd11364">
    <property type="entry name" value="RNase_PH_PNPase_2"/>
    <property type="match status" value="1"/>
</dbReference>
<dbReference type="FunFam" id="3.30.1370.10:FF:000001">
    <property type="entry name" value="Polyribonucleotide nucleotidyltransferase"/>
    <property type="match status" value="1"/>
</dbReference>
<dbReference type="FunFam" id="3.30.230.70:FF:000001">
    <property type="entry name" value="Polyribonucleotide nucleotidyltransferase"/>
    <property type="match status" value="1"/>
</dbReference>
<dbReference type="FunFam" id="3.30.230.70:FF:000002">
    <property type="entry name" value="Polyribonucleotide nucleotidyltransferase"/>
    <property type="match status" value="1"/>
</dbReference>
<dbReference type="Gene3D" id="3.30.230.70">
    <property type="entry name" value="GHMP Kinase, N-terminal domain"/>
    <property type="match status" value="2"/>
</dbReference>
<dbReference type="Gene3D" id="3.30.1370.10">
    <property type="entry name" value="K Homology domain, type 1"/>
    <property type="match status" value="1"/>
</dbReference>
<dbReference type="Gene3D" id="2.40.50.140">
    <property type="entry name" value="Nucleic acid-binding proteins"/>
    <property type="match status" value="1"/>
</dbReference>
<dbReference type="HAMAP" id="MF_01595">
    <property type="entry name" value="PNPase"/>
    <property type="match status" value="1"/>
</dbReference>
<dbReference type="InterPro" id="IPR001247">
    <property type="entry name" value="ExoRNase_PH_dom1"/>
</dbReference>
<dbReference type="InterPro" id="IPR015847">
    <property type="entry name" value="ExoRNase_PH_dom2"/>
</dbReference>
<dbReference type="InterPro" id="IPR036345">
    <property type="entry name" value="ExoRNase_PH_dom2_sf"/>
</dbReference>
<dbReference type="InterPro" id="IPR004087">
    <property type="entry name" value="KH_dom"/>
</dbReference>
<dbReference type="InterPro" id="IPR004088">
    <property type="entry name" value="KH_dom_type_1"/>
</dbReference>
<dbReference type="InterPro" id="IPR036612">
    <property type="entry name" value="KH_dom_type_1_sf"/>
</dbReference>
<dbReference type="InterPro" id="IPR012340">
    <property type="entry name" value="NA-bd_OB-fold"/>
</dbReference>
<dbReference type="InterPro" id="IPR012162">
    <property type="entry name" value="PNPase"/>
</dbReference>
<dbReference type="InterPro" id="IPR027408">
    <property type="entry name" value="PNPase/RNase_PH_dom_sf"/>
</dbReference>
<dbReference type="InterPro" id="IPR015848">
    <property type="entry name" value="PNPase_PH_RNA-bd_bac/org-type"/>
</dbReference>
<dbReference type="InterPro" id="IPR020568">
    <property type="entry name" value="Ribosomal_Su5_D2-typ_SF"/>
</dbReference>
<dbReference type="InterPro" id="IPR003029">
    <property type="entry name" value="S1_domain"/>
</dbReference>
<dbReference type="NCBIfam" id="TIGR03591">
    <property type="entry name" value="polynuc_phos"/>
    <property type="match status" value="1"/>
</dbReference>
<dbReference type="NCBIfam" id="NF008805">
    <property type="entry name" value="PRK11824.1"/>
    <property type="match status" value="1"/>
</dbReference>
<dbReference type="PANTHER" id="PTHR11252">
    <property type="entry name" value="POLYRIBONUCLEOTIDE NUCLEOTIDYLTRANSFERASE"/>
    <property type="match status" value="1"/>
</dbReference>
<dbReference type="PANTHER" id="PTHR11252:SF0">
    <property type="entry name" value="POLYRIBONUCLEOTIDE NUCLEOTIDYLTRANSFERASE 1, MITOCHONDRIAL"/>
    <property type="match status" value="1"/>
</dbReference>
<dbReference type="Pfam" id="PF00013">
    <property type="entry name" value="KH_1"/>
    <property type="match status" value="1"/>
</dbReference>
<dbReference type="Pfam" id="PF03726">
    <property type="entry name" value="PNPase"/>
    <property type="match status" value="1"/>
</dbReference>
<dbReference type="Pfam" id="PF01138">
    <property type="entry name" value="RNase_PH"/>
    <property type="match status" value="2"/>
</dbReference>
<dbReference type="Pfam" id="PF03725">
    <property type="entry name" value="RNase_PH_C"/>
    <property type="match status" value="2"/>
</dbReference>
<dbReference type="Pfam" id="PF00575">
    <property type="entry name" value="S1"/>
    <property type="match status" value="1"/>
</dbReference>
<dbReference type="PIRSF" id="PIRSF005499">
    <property type="entry name" value="PNPase"/>
    <property type="match status" value="1"/>
</dbReference>
<dbReference type="SMART" id="SM00322">
    <property type="entry name" value="KH"/>
    <property type="match status" value="1"/>
</dbReference>
<dbReference type="SMART" id="SM00316">
    <property type="entry name" value="S1"/>
    <property type="match status" value="1"/>
</dbReference>
<dbReference type="SUPFAM" id="SSF54791">
    <property type="entry name" value="Eukaryotic type KH-domain (KH-domain type I)"/>
    <property type="match status" value="1"/>
</dbReference>
<dbReference type="SUPFAM" id="SSF50249">
    <property type="entry name" value="Nucleic acid-binding proteins"/>
    <property type="match status" value="1"/>
</dbReference>
<dbReference type="SUPFAM" id="SSF55666">
    <property type="entry name" value="Ribonuclease PH domain 2-like"/>
    <property type="match status" value="2"/>
</dbReference>
<dbReference type="SUPFAM" id="SSF54211">
    <property type="entry name" value="Ribosomal protein S5 domain 2-like"/>
    <property type="match status" value="2"/>
</dbReference>
<dbReference type="PROSITE" id="PS50084">
    <property type="entry name" value="KH_TYPE_1"/>
    <property type="match status" value="1"/>
</dbReference>
<dbReference type="PROSITE" id="PS50126">
    <property type="entry name" value="S1"/>
    <property type="match status" value="1"/>
</dbReference>
<organism>
    <name type="scientific">Chlorobium chlorochromatii (strain CaD3)</name>
    <dbReference type="NCBI Taxonomy" id="340177"/>
    <lineage>
        <taxon>Bacteria</taxon>
        <taxon>Pseudomonadati</taxon>
        <taxon>Chlorobiota</taxon>
        <taxon>Chlorobiia</taxon>
        <taxon>Chlorobiales</taxon>
        <taxon>Chlorobiaceae</taxon>
        <taxon>Chlorobium/Pelodictyon group</taxon>
        <taxon>Chlorobium</taxon>
    </lineage>
</organism>
<evidence type="ECO:0000255" key="1">
    <source>
        <dbReference type="HAMAP-Rule" id="MF_01595"/>
    </source>
</evidence>
<keyword id="KW-0963">Cytoplasm</keyword>
<keyword id="KW-0460">Magnesium</keyword>
<keyword id="KW-0479">Metal-binding</keyword>
<keyword id="KW-0548">Nucleotidyltransferase</keyword>
<keyword id="KW-0694">RNA-binding</keyword>
<keyword id="KW-0808">Transferase</keyword>
<accession>Q3APY4</accession>
<proteinExistence type="inferred from homology"/>
<reference key="1">
    <citation type="submission" date="2005-08" db="EMBL/GenBank/DDBJ databases">
        <title>Complete sequence of Chlorobium chlorochromatii CaD3.</title>
        <authorList>
            <consortium name="US DOE Joint Genome Institute"/>
            <person name="Copeland A."/>
            <person name="Lucas S."/>
            <person name="Lapidus A."/>
            <person name="Barry K."/>
            <person name="Detter J.C."/>
            <person name="Glavina T."/>
            <person name="Hammon N."/>
            <person name="Israni S."/>
            <person name="Pitluck S."/>
            <person name="Bryant D."/>
            <person name="Schmutz J."/>
            <person name="Larimer F."/>
            <person name="Land M."/>
            <person name="Kyrpides N."/>
            <person name="Ivanova N."/>
            <person name="Richardson P."/>
        </authorList>
    </citation>
    <scope>NUCLEOTIDE SEQUENCE [LARGE SCALE GENOMIC DNA]</scope>
    <source>
        <strain>CaD3</strain>
    </source>
</reference>
<name>PNP_CHLCH</name>